<keyword id="KW-0025">Alternative splicing</keyword>
<keyword id="KW-0127">Catecholamine biosynthesis</keyword>
<keyword id="KW-0966">Cell projection</keyword>
<keyword id="KW-0963">Cytoplasm</keyword>
<keyword id="KW-0408">Iron</keyword>
<keyword id="KW-0479">Metal-binding</keyword>
<keyword id="KW-0503">Monooxygenase</keyword>
<keyword id="KW-0530">Neurotransmitter biosynthesis</keyword>
<keyword id="KW-0560">Oxidoreductase</keyword>
<keyword id="KW-1185">Reference proteome</keyword>
<accession>P18459</accession>
<accession>Q24000</accession>
<accession>Q8SY95</accession>
<sequence>MMAVAAAQKNREMFAIKKSYSIENGYPSRRRSLVDDARFETLVVKQTKQTVLEEARSKANDDSLEDCIVQAQEHIPSEQDVELQDEHANLENLPLEEYVPVEEDVEFESVEQEQSESQSQEPEGNQQPTKNDYGLTEDEILLANAASESSDAEAAMQSAALVVRLKEGISSLGRILKAIETFHGTVQHVESRQSRVEGVDHDVLIKLDMTRGNLLQLIRSLRQSGSFSSMNLMADNNLNVKAPWFPKHASELDNCNHLMTKYEPDLDMNHPGFADKVYRQRRKEIAEIAFAYKYGDPIPFIDYSDVEVKTWRSVFKTVQDLAPKHACAEYRAAFQKLQDEQIFVETRLPQLQEMSDFLRKNTGFSLRPAAGLLTARDFLASLAFRIFQSTQYVRHVNSPYHTPEPDSIHELLGHMPLLADPSFAQFSQEIGLASLGASDEEIEKLSTVYWFTVEFGLCKEHGQIKAYGAGLLSSYGELLHAISDKCEHRAFEPASTAVQPYQDQEYQPIYYVAESFEDAKDKFRRWVSTMSRPFEVRFNPHTERVEVLDSVDKLETLVHQMNTEILHLTNAISKLRRPF</sequence>
<reference key="1">
    <citation type="journal article" date="1989" name="Neuron">
        <title>Isolation and characterization of the gene for Drosophila tyrosine hydroxylase.</title>
        <authorList>
            <person name="Neckameyer W.S."/>
            <person name="Quinn W.G."/>
        </authorList>
    </citation>
    <scope>NUCLEOTIDE SEQUENCE [GENOMIC DNA / MRNA] (ISOFORMS NEURONAL AND HYPODERMAL)</scope>
</reference>
<reference key="2">
    <citation type="journal article" date="2000" name="Science">
        <title>The genome sequence of Drosophila melanogaster.</title>
        <authorList>
            <person name="Adams M.D."/>
            <person name="Celniker S.E."/>
            <person name="Holt R.A."/>
            <person name="Evans C.A."/>
            <person name="Gocayne J.D."/>
            <person name="Amanatides P.G."/>
            <person name="Scherer S.E."/>
            <person name="Li P.W."/>
            <person name="Hoskins R.A."/>
            <person name="Galle R.F."/>
            <person name="George R.A."/>
            <person name="Lewis S.E."/>
            <person name="Richards S."/>
            <person name="Ashburner M."/>
            <person name="Henderson S.N."/>
            <person name="Sutton G.G."/>
            <person name="Wortman J.R."/>
            <person name="Yandell M.D."/>
            <person name="Zhang Q."/>
            <person name="Chen L.X."/>
            <person name="Brandon R.C."/>
            <person name="Rogers Y.-H.C."/>
            <person name="Blazej R.G."/>
            <person name="Champe M."/>
            <person name="Pfeiffer B.D."/>
            <person name="Wan K.H."/>
            <person name="Doyle C."/>
            <person name="Baxter E.G."/>
            <person name="Helt G."/>
            <person name="Nelson C.R."/>
            <person name="Miklos G.L.G."/>
            <person name="Abril J.F."/>
            <person name="Agbayani A."/>
            <person name="An H.-J."/>
            <person name="Andrews-Pfannkoch C."/>
            <person name="Baldwin D."/>
            <person name="Ballew R.M."/>
            <person name="Basu A."/>
            <person name="Baxendale J."/>
            <person name="Bayraktaroglu L."/>
            <person name="Beasley E.M."/>
            <person name="Beeson K.Y."/>
            <person name="Benos P.V."/>
            <person name="Berman B.P."/>
            <person name="Bhandari D."/>
            <person name="Bolshakov S."/>
            <person name="Borkova D."/>
            <person name="Botchan M.R."/>
            <person name="Bouck J."/>
            <person name="Brokstein P."/>
            <person name="Brottier P."/>
            <person name="Burtis K.C."/>
            <person name="Busam D.A."/>
            <person name="Butler H."/>
            <person name="Cadieu E."/>
            <person name="Center A."/>
            <person name="Chandra I."/>
            <person name="Cherry J.M."/>
            <person name="Cawley S."/>
            <person name="Dahlke C."/>
            <person name="Davenport L.B."/>
            <person name="Davies P."/>
            <person name="de Pablos B."/>
            <person name="Delcher A."/>
            <person name="Deng Z."/>
            <person name="Mays A.D."/>
            <person name="Dew I."/>
            <person name="Dietz S.M."/>
            <person name="Dodson K."/>
            <person name="Doup L.E."/>
            <person name="Downes M."/>
            <person name="Dugan-Rocha S."/>
            <person name="Dunkov B.C."/>
            <person name="Dunn P."/>
            <person name="Durbin K.J."/>
            <person name="Evangelista C.C."/>
            <person name="Ferraz C."/>
            <person name="Ferriera S."/>
            <person name="Fleischmann W."/>
            <person name="Fosler C."/>
            <person name="Gabrielian A.E."/>
            <person name="Garg N.S."/>
            <person name="Gelbart W.M."/>
            <person name="Glasser K."/>
            <person name="Glodek A."/>
            <person name="Gong F."/>
            <person name="Gorrell J.H."/>
            <person name="Gu Z."/>
            <person name="Guan P."/>
            <person name="Harris M."/>
            <person name="Harris N.L."/>
            <person name="Harvey D.A."/>
            <person name="Heiman T.J."/>
            <person name="Hernandez J.R."/>
            <person name="Houck J."/>
            <person name="Hostin D."/>
            <person name="Houston K.A."/>
            <person name="Howland T.J."/>
            <person name="Wei M.-H."/>
            <person name="Ibegwam C."/>
            <person name="Jalali M."/>
            <person name="Kalush F."/>
            <person name="Karpen G.H."/>
            <person name="Ke Z."/>
            <person name="Kennison J.A."/>
            <person name="Ketchum K.A."/>
            <person name="Kimmel B.E."/>
            <person name="Kodira C.D."/>
            <person name="Kraft C.L."/>
            <person name="Kravitz S."/>
            <person name="Kulp D."/>
            <person name="Lai Z."/>
            <person name="Lasko P."/>
            <person name="Lei Y."/>
            <person name="Levitsky A.A."/>
            <person name="Li J.H."/>
            <person name="Li Z."/>
            <person name="Liang Y."/>
            <person name="Lin X."/>
            <person name="Liu X."/>
            <person name="Mattei B."/>
            <person name="McIntosh T.C."/>
            <person name="McLeod M.P."/>
            <person name="McPherson D."/>
            <person name="Merkulov G."/>
            <person name="Milshina N.V."/>
            <person name="Mobarry C."/>
            <person name="Morris J."/>
            <person name="Moshrefi A."/>
            <person name="Mount S.M."/>
            <person name="Moy M."/>
            <person name="Murphy B."/>
            <person name="Murphy L."/>
            <person name="Muzny D.M."/>
            <person name="Nelson D.L."/>
            <person name="Nelson D.R."/>
            <person name="Nelson K.A."/>
            <person name="Nixon K."/>
            <person name="Nusskern D.R."/>
            <person name="Pacleb J.M."/>
            <person name="Palazzolo M."/>
            <person name="Pittman G.S."/>
            <person name="Pan S."/>
            <person name="Pollard J."/>
            <person name="Puri V."/>
            <person name="Reese M.G."/>
            <person name="Reinert K."/>
            <person name="Remington K."/>
            <person name="Saunders R.D.C."/>
            <person name="Scheeler F."/>
            <person name="Shen H."/>
            <person name="Shue B.C."/>
            <person name="Siden-Kiamos I."/>
            <person name="Simpson M."/>
            <person name="Skupski M.P."/>
            <person name="Smith T.J."/>
            <person name="Spier E."/>
            <person name="Spradling A.C."/>
            <person name="Stapleton M."/>
            <person name="Strong R."/>
            <person name="Sun E."/>
            <person name="Svirskas R."/>
            <person name="Tector C."/>
            <person name="Turner R."/>
            <person name="Venter E."/>
            <person name="Wang A.H."/>
            <person name="Wang X."/>
            <person name="Wang Z.-Y."/>
            <person name="Wassarman D.A."/>
            <person name="Weinstock G.M."/>
            <person name="Weissenbach J."/>
            <person name="Williams S.M."/>
            <person name="Woodage T."/>
            <person name="Worley K.C."/>
            <person name="Wu D."/>
            <person name="Yang S."/>
            <person name="Yao Q.A."/>
            <person name="Ye J."/>
            <person name="Yeh R.-F."/>
            <person name="Zaveri J.S."/>
            <person name="Zhan M."/>
            <person name="Zhang G."/>
            <person name="Zhao Q."/>
            <person name="Zheng L."/>
            <person name="Zheng X.H."/>
            <person name="Zhong F.N."/>
            <person name="Zhong W."/>
            <person name="Zhou X."/>
            <person name="Zhu S.C."/>
            <person name="Zhu X."/>
            <person name="Smith H.O."/>
            <person name="Gibbs R.A."/>
            <person name="Myers E.W."/>
            <person name="Rubin G.M."/>
            <person name="Venter J.C."/>
        </authorList>
    </citation>
    <scope>NUCLEOTIDE SEQUENCE [LARGE SCALE GENOMIC DNA]</scope>
    <source>
        <strain>Berkeley</strain>
    </source>
</reference>
<reference key="3">
    <citation type="journal article" date="2002" name="Genome Biol.">
        <title>Annotation of the Drosophila melanogaster euchromatic genome: a systematic review.</title>
        <authorList>
            <person name="Misra S."/>
            <person name="Crosby M.A."/>
            <person name="Mungall C.J."/>
            <person name="Matthews B.B."/>
            <person name="Campbell K.S."/>
            <person name="Hradecky P."/>
            <person name="Huang Y."/>
            <person name="Kaminker J.S."/>
            <person name="Millburn G.H."/>
            <person name="Prochnik S.E."/>
            <person name="Smith C.D."/>
            <person name="Tupy J.L."/>
            <person name="Whitfield E.J."/>
            <person name="Bayraktaroglu L."/>
            <person name="Berman B.P."/>
            <person name="Bettencourt B.R."/>
            <person name="Celniker S.E."/>
            <person name="de Grey A.D.N.J."/>
            <person name="Drysdale R.A."/>
            <person name="Harris N.L."/>
            <person name="Richter J."/>
            <person name="Russo S."/>
            <person name="Schroeder A.J."/>
            <person name="Shu S.Q."/>
            <person name="Stapleton M."/>
            <person name="Yamada C."/>
            <person name="Ashburner M."/>
            <person name="Gelbart W.M."/>
            <person name="Rubin G.M."/>
            <person name="Lewis S.E."/>
        </authorList>
    </citation>
    <scope>GENOME REANNOTATION</scope>
    <scope>ALTERNATIVE SPLICING</scope>
    <source>
        <strain>Berkeley</strain>
    </source>
</reference>
<reference key="4">
    <citation type="journal article" date="2002" name="Genome Biol.">
        <title>A Drosophila full-length cDNA resource.</title>
        <authorList>
            <person name="Stapleton M."/>
            <person name="Carlson J.W."/>
            <person name="Brokstein P."/>
            <person name="Yu C."/>
            <person name="Champe M."/>
            <person name="George R.A."/>
            <person name="Guarin H."/>
            <person name="Kronmiller B."/>
            <person name="Pacleb J.M."/>
            <person name="Park S."/>
            <person name="Wan K.H."/>
            <person name="Rubin G.M."/>
            <person name="Celniker S.E."/>
        </authorList>
    </citation>
    <scope>NUCLEOTIDE SEQUENCE [LARGE SCALE MRNA] (ISOFORM NEURONAL)</scope>
    <source>
        <strain>Berkeley</strain>
        <tissue>Head</tissue>
    </source>
</reference>
<evidence type="ECO:0000250" key="1"/>
<evidence type="ECO:0000250" key="2">
    <source>
        <dbReference type="UniProtKB" id="P07101"/>
    </source>
</evidence>
<evidence type="ECO:0000250" key="3">
    <source>
        <dbReference type="UniProtKB" id="P24529"/>
    </source>
</evidence>
<evidence type="ECO:0000256" key="4">
    <source>
        <dbReference type="SAM" id="MobiDB-lite"/>
    </source>
</evidence>
<evidence type="ECO:0000303" key="5">
    <source>
    </source>
</evidence>
<evidence type="ECO:0000305" key="6"/>
<comment type="function">
    <text>Plays an important role in the physiology of adrenergic neurons.</text>
</comment>
<comment type="catalytic activity">
    <reaction>
        <text>(6R)-L-erythro-5,6,7,8-tetrahydrobiopterin + L-tyrosine + O2 = (4aS,6R)-4a-hydroxy-L-erythro-5,6,7,8-tetrahydrobiopterin + L-dopa</text>
        <dbReference type="Rhea" id="RHEA:18201"/>
        <dbReference type="ChEBI" id="CHEBI:15379"/>
        <dbReference type="ChEBI" id="CHEBI:15642"/>
        <dbReference type="ChEBI" id="CHEBI:57504"/>
        <dbReference type="ChEBI" id="CHEBI:58315"/>
        <dbReference type="ChEBI" id="CHEBI:59560"/>
        <dbReference type="EC" id="1.14.16.2"/>
    </reaction>
</comment>
<comment type="cofactor">
    <cofactor>
        <name>Fe(2+)</name>
        <dbReference type="ChEBI" id="CHEBI:29033"/>
    </cofactor>
</comment>
<comment type="activity regulation">
    <text evidence="2">Phosphorylation leads to an increase in the catalytic activity.</text>
</comment>
<comment type="pathway">
    <text>Catecholamine biosynthesis; dopamine biosynthesis; dopamine from L-tyrosine: step 1/2.</text>
</comment>
<comment type="subcellular location">
    <subcellularLocation>
        <location evidence="3">Cytoplasm</location>
        <location evidence="3">Perinuclear region</location>
    </subcellularLocation>
    <subcellularLocation>
        <location evidence="3">Cell projection</location>
        <location evidence="3">Axon</location>
    </subcellularLocation>
    <text evidence="3">Expressed in dopaminergic axons and axon terminals.</text>
</comment>
<comment type="alternative products">
    <event type="alternative splicing"/>
    <isoform>
        <id>P18459-1</id>
        <name>Neuronal</name>
        <sequence type="displayed"/>
    </isoform>
    <isoform>
        <id>P18459-2</id>
        <name>Hypodermal</name>
        <sequence type="described" ref="VSP_000545"/>
    </isoform>
</comment>
<comment type="similarity">
    <text evidence="6">Belongs to the biopterin-dependent aromatic amino acid hydroxylase family.</text>
</comment>
<organism>
    <name type="scientific">Drosophila melanogaster</name>
    <name type="common">Fruit fly</name>
    <dbReference type="NCBI Taxonomy" id="7227"/>
    <lineage>
        <taxon>Eukaryota</taxon>
        <taxon>Metazoa</taxon>
        <taxon>Ecdysozoa</taxon>
        <taxon>Arthropoda</taxon>
        <taxon>Hexapoda</taxon>
        <taxon>Insecta</taxon>
        <taxon>Pterygota</taxon>
        <taxon>Neoptera</taxon>
        <taxon>Endopterygota</taxon>
        <taxon>Diptera</taxon>
        <taxon>Brachycera</taxon>
        <taxon>Muscomorpha</taxon>
        <taxon>Ephydroidea</taxon>
        <taxon>Drosophilidae</taxon>
        <taxon>Drosophila</taxon>
        <taxon>Sophophora</taxon>
    </lineage>
</organism>
<proteinExistence type="evidence at transcript level"/>
<gene>
    <name type="primary">ple</name>
    <name type="synonym">TH</name>
    <name type="ORF">CG10118</name>
</gene>
<name>TY3H_DROME</name>
<protein>
    <recommendedName>
        <fullName>Tyrosine 3-monooxygenase</fullName>
        <ecNumber>1.14.16.2</ecNumber>
    </recommendedName>
    <alternativeName>
        <fullName>Protein Pale</fullName>
    </alternativeName>
    <alternativeName>
        <fullName>Tyrosine 3-hydroxylase</fullName>
        <shortName>TH</shortName>
    </alternativeName>
</protein>
<dbReference type="EC" id="1.14.16.2"/>
<dbReference type="EMBL" id="U14395">
    <property type="protein sequence ID" value="AAA62876.1"/>
    <property type="molecule type" value="Genomic_DNA"/>
</dbReference>
<dbReference type="EMBL" id="U14395">
    <property type="protein sequence ID" value="AAA62877.1"/>
    <property type="molecule type" value="Genomic_DNA"/>
</dbReference>
<dbReference type="EMBL" id="X76209">
    <property type="protein sequence ID" value="CAA53802.1"/>
    <property type="molecule type" value="mRNA"/>
</dbReference>
<dbReference type="EMBL" id="AE014296">
    <property type="protein sequence ID" value="AAN12080.1"/>
    <property type="molecule type" value="Genomic_DNA"/>
</dbReference>
<dbReference type="EMBL" id="AE014296">
    <property type="protein sequence ID" value="AAF50648.1"/>
    <property type="molecule type" value="Genomic_DNA"/>
</dbReference>
<dbReference type="EMBL" id="AY071698">
    <property type="protein sequence ID" value="AAL49320.1"/>
    <property type="molecule type" value="mRNA"/>
</dbReference>
<dbReference type="PIR" id="A55369">
    <property type="entry name" value="A55369"/>
</dbReference>
<dbReference type="RefSeq" id="NP_001286955.1">
    <molecule id="P18459-1"/>
    <property type="nucleotide sequence ID" value="NM_001300026.1"/>
</dbReference>
<dbReference type="RefSeq" id="NP_476897.1">
    <molecule id="P18459-2"/>
    <property type="nucleotide sequence ID" value="NM_057549.3"/>
</dbReference>
<dbReference type="RefSeq" id="NP_476898.1">
    <molecule id="P18459-1"/>
    <property type="nucleotide sequence ID" value="NM_057550.4"/>
</dbReference>
<dbReference type="SMR" id="P18459"/>
<dbReference type="BioGRID" id="64196">
    <property type="interactions" value="27"/>
</dbReference>
<dbReference type="DIP" id="DIP-17399N"/>
<dbReference type="FunCoup" id="P18459">
    <property type="interactions" value="65"/>
</dbReference>
<dbReference type="IntAct" id="P18459">
    <property type="interactions" value="2"/>
</dbReference>
<dbReference type="STRING" id="7227.FBpp0311654"/>
<dbReference type="iPTMnet" id="P18459"/>
<dbReference type="PaxDb" id="7227-FBpp0076666"/>
<dbReference type="EnsemblMetazoa" id="FBtr0076956">
    <molecule id="P18459-2"/>
    <property type="protein sequence ID" value="FBpp0076665"/>
    <property type="gene ID" value="FBgn0005626"/>
</dbReference>
<dbReference type="EnsemblMetazoa" id="FBtr0076957">
    <molecule id="P18459-1"/>
    <property type="protein sequence ID" value="FBpp0076666"/>
    <property type="gene ID" value="FBgn0005626"/>
</dbReference>
<dbReference type="EnsemblMetazoa" id="FBtr0345585">
    <molecule id="P18459-1"/>
    <property type="protein sequence ID" value="FBpp0311654"/>
    <property type="gene ID" value="FBgn0005626"/>
</dbReference>
<dbReference type="GeneID" id="38746"/>
<dbReference type="KEGG" id="dme:Dmel_CG10118"/>
<dbReference type="AGR" id="FB:FBgn0005626"/>
<dbReference type="CTD" id="18809"/>
<dbReference type="FlyBase" id="FBgn0005626">
    <property type="gene designation" value="ple"/>
</dbReference>
<dbReference type="VEuPathDB" id="VectorBase:FBgn0005626"/>
<dbReference type="eggNOG" id="KOG3820">
    <property type="taxonomic scope" value="Eukaryota"/>
</dbReference>
<dbReference type="GeneTree" id="ENSGT00950000182885"/>
<dbReference type="InParanoid" id="P18459"/>
<dbReference type="OMA" id="SVEHGYP"/>
<dbReference type="OrthoDB" id="983542at2759"/>
<dbReference type="PhylomeDB" id="P18459"/>
<dbReference type="Reactome" id="R-DME-209905">
    <property type="pathway name" value="Catecholamine biosynthesis"/>
</dbReference>
<dbReference type="SignaLink" id="P18459"/>
<dbReference type="UniPathway" id="UPA00747">
    <property type="reaction ID" value="UER00733"/>
</dbReference>
<dbReference type="BioGRID-ORCS" id="38746">
    <property type="hits" value="0 hits in 3 CRISPR screens"/>
</dbReference>
<dbReference type="ChiTaRS" id="ple">
    <property type="organism name" value="fly"/>
</dbReference>
<dbReference type="GenomeRNAi" id="38746"/>
<dbReference type="PRO" id="PR:P18459"/>
<dbReference type="Proteomes" id="UP000000803">
    <property type="component" value="Chromosome 3L"/>
</dbReference>
<dbReference type="Bgee" id="FBgn0005626">
    <property type="expression patterns" value="Expressed in adult dopaminergic neuron in brain and 141 other cell types or tissues"/>
</dbReference>
<dbReference type="ExpressionAtlas" id="P18459">
    <property type="expression patterns" value="baseline and differential"/>
</dbReference>
<dbReference type="GO" id="GO:0030424">
    <property type="term" value="C:axon"/>
    <property type="evidence" value="ECO:0000318"/>
    <property type="project" value="GO_Central"/>
</dbReference>
<dbReference type="GO" id="GO:0005737">
    <property type="term" value="C:cytoplasm"/>
    <property type="evidence" value="ECO:0000318"/>
    <property type="project" value="GO_Central"/>
</dbReference>
<dbReference type="GO" id="GO:0043204">
    <property type="term" value="C:perikaryon"/>
    <property type="evidence" value="ECO:0000318"/>
    <property type="project" value="GO_Central"/>
</dbReference>
<dbReference type="GO" id="GO:0048471">
    <property type="term" value="C:perinuclear region of cytoplasm"/>
    <property type="evidence" value="ECO:0007669"/>
    <property type="project" value="UniProtKB-SubCell"/>
</dbReference>
<dbReference type="GO" id="GO:0005506">
    <property type="term" value="F:iron ion binding"/>
    <property type="evidence" value="ECO:0007669"/>
    <property type="project" value="InterPro"/>
</dbReference>
<dbReference type="GO" id="GO:0004511">
    <property type="term" value="F:tyrosine 3-monooxygenase activity"/>
    <property type="evidence" value="ECO:0000318"/>
    <property type="project" value="GO_Central"/>
</dbReference>
<dbReference type="GO" id="GO:0048085">
    <property type="term" value="P:adult chitin-containing cuticle pigmentation"/>
    <property type="evidence" value="ECO:0000315"/>
    <property type="project" value="FlyBase"/>
</dbReference>
<dbReference type="GO" id="GO:0008344">
    <property type="term" value="P:adult locomotory behavior"/>
    <property type="evidence" value="ECO:0000315"/>
    <property type="project" value="FlyBase"/>
</dbReference>
<dbReference type="GO" id="GO:0006584">
    <property type="term" value="P:catecholamine metabolic process"/>
    <property type="evidence" value="ECO:0000303"/>
    <property type="project" value="UniProtKB"/>
</dbReference>
<dbReference type="GO" id="GO:0007619">
    <property type="term" value="P:courtship behavior"/>
    <property type="evidence" value="ECO:0000303"/>
    <property type="project" value="FlyBase"/>
</dbReference>
<dbReference type="GO" id="GO:0048067">
    <property type="term" value="P:cuticle pigmentation"/>
    <property type="evidence" value="ECO:0000315"/>
    <property type="project" value="FlyBase"/>
</dbReference>
<dbReference type="GO" id="GO:0048066">
    <property type="term" value="P:developmental pigmentation"/>
    <property type="evidence" value="ECO:0000304"/>
    <property type="project" value="FlyBase"/>
</dbReference>
<dbReference type="GO" id="GO:0042416">
    <property type="term" value="P:dopamine biosynthetic process"/>
    <property type="evidence" value="ECO:0000315"/>
    <property type="project" value="FlyBase"/>
</dbReference>
<dbReference type="GO" id="GO:0006585">
    <property type="term" value="P:dopamine biosynthetic process from tyrosine"/>
    <property type="evidence" value="ECO:0000318"/>
    <property type="project" value="GO_Central"/>
</dbReference>
<dbReference type="GO" id="GO:0042417">
    <property type="term" value="P:dopamine metabolic process"/>
    <property type="evidence" value="ECO:0000315"/>
    <property type="project" value="FlyBase"/>
</dbReference>
<dbReference type="GO" id="GO:0008049">
    <property type="term" value="P:male courtship behavior"/>
    <property type="evidence" value="ECO:0000315"/>
    <property type="project" value="FlyBase"/>
</dbReference>
<dbReference type="GO" id="GO:0048082">
    <property type="term" value="P:regulation of adult chitin-containing cuticle pigmentation"/>
    <property type="evidence" value="ECO:0000315"/>
    <property type="project" value="FlyBase"/>
</dbReference>
<dbReference type="GO" id="GO:2000274">
    <property type="term" value="P:regulation of epithelial cell migration, open tracheal system"/>
    <property type="evidence" value="ECO:0000315"/>
    <property type="project" value="FlyBase"/>
</dbReference>
<dbReference type="GO" id="GO:0042542">
    <property type="term" value="P:response to hydrogen peroxide"/>
    <property type="evidence" value="ECO:0000314"/>
    <property type="project" value="FlyBase"/>
</dbReference>
<dbReference type="GO" id="GO:0009611">
    <property type="term" value="P:response to wounding"/>
    <property type="evidence" value="ECO:0000270"/>
    <property type="project" value="FlyBase"/>
</dbReference>
<dbReference type="GO" id="GO:0040040">
    <property type="term" value="P:thermosensory behavior"/>
    <property type="evidence" value="ECO:0000315"/>
    <property type="project" value="FlyBase"/>
</dbReference>
<dbReference type="GO" id="GO:0043052">
    <property type="term" value="P:thermotaxis"/>
    <property type="evidence" value="ECO:0000315"/>
    <property type="project" value="FlyBase"/>
</dbReference>
<dbReference type="GO" id="GO:0035220">
    <property type="term" value="P:wing disc development"/>
    <property type="evidence" value="ECO:0000315"/>
    <property type="project" value="FlyBase"/>
</dbReference>
<dbReference type="CDD" id="cd03345">
    <property type="entry name" value="eu_TyrOH"/>
    <property type="match status" value="1"/>
</dbReference>
<dbReference type="FunFam" id="1.10.800.10:FF:000004">
    <property type="entry name" value="Tyrosine 3-monooxygenase"/>
    <property type="match status" value="1"/>
</dbReference>
<dbReference type="Gene3D" id="1.10.800.10">
    <property type="entry name" value="Aromatic amino acid hydroxylase"/>
    <property type="match status" value="1"/>
</dbReference>
<dbReference type="InterPro" id="IPR045865">
    <property type="entry name" value="ACT-like_dom_sf"/>
</dbReference>
<dbReference type="InterPro" id="IPR001273">
    <property type="entry name" value="ArAA_hydroxylase"/>
</dbReference>
<dbReference type="InterPro" id="IPR018301">
    <property type="entry name" value="ArAA_hydroxylase_Fe/CU_BS"/>
</dbReference>
<dbReference type="InterPro" id="IPR036951">
    <property type="entry name" value="ArAA_hydroxylase_sf"/>
</dbReference>
<dbReference type="InterPro" id="IPR036329">
    <property type="entry name" value="Aro-AA_hydroxylase_C_sf"/>
</dbReference>
<dbReference type="InterPro" id="IPR019774">
    <property type="entry name" value="Aromatic-AA_hydroxylase_C"/>
</dbReference>
<dbReference type="InterPro" id="IPR041903">
    <property type="entry name" value="Eu_TyrOH_cat"/>
</dbReference>
<dbReference type="InterPro" id="IPR005962">
    <property type="entry name" value="Tyr_3_mOase"/>
</dbReference>
<dbReference type="InterPro" id="IPR019773">
    <property type="entry name" value="Tyrosine_3-monooxygenase-like"/>
</dbReference>
<dbReference type="NCBIfam" id="TIGR01269">
    <property type="entry name" value="Tyr_3_monoox"/>
    <property type="match status" value="1"/>
</dbReference>
<dbReference type="PANTHER" id="PTHR11473">
    <property type="entry name" value="AROMATIC AMINO ACID HYDROXYLASE"/>
    <property type="match status" value="1"/>
</dbReference>
<dbReference type="PANTHER" id="PTHR11473:SF15">
    <property type="entry name" value="TYROSINE 3-MONOOXYGENASE"/>
    <property type="match status" value="1"/>
</dbReference>
<dbReference type="Pfam" id="PF00351">
    <property type="entry name" value="Biopterin_H"/>
    <property type="match status" value="1"/>
</dbReference>
<dbReference type="PIRSF" id="PIRSF000336">
    <property type="entry name" value="TH"/>
    <property type="match status" value="1"/>
</dbReference>
<dbReference type="PRINTS" id="PR00372">
    <property type="entry name" value="FYWHYDRXLASE"/>
</dbReference>
<dbReference type="SUPFAM" id="SSF55021">
    <property type="entry name" value="ACT-like"/>
    <property type="match status" value="1"/>
</dbReference>
<dbReference type="SUPFAM" id="SSF56534">
    <property type="entry name" value="Aromatic aminoacid monoxygenases, catalytic and oligomerization domains"/>
    <property type="match status" value="1"/>
</dbReference>
<dbReference type="PROSITE" id="PS00367">
    <property type="entry name" value="BH4_AAA_HYDROXYL_1"/>
    <property type="match status" value="1"/>
</dbReference>
<dbReference type="PROSITE" id="PS51410">
    <property type="entry name" value="BH4_AAA_HYDROXYL_2"/>
    <property type="match status" value="1"/>
</dbReference>
<feature type="chain" id="PRO_0000205566" description="Tyrosine 3-monooxygenase">
    <location>
        <begin position="1"/>
        <end position="579"/>
    </location>
</feature>
<feature type="region of interest" description="Disordered" evidence="4">
    <location>
        <begin position="105"/>
        <end position="132"/>
    </location>
</feature>
<feature type="compositionally biased region" description="Acidic residues" evidence="4">
    <location>
        <begin position="105"/>
        <end position="114"/>
    </location>
</feature>
<feature type="binding site" evidence="1">
    <location>
        <position position="409"/>
    </location>
    <ligand>
        <name>Fe cation</name>
        <dbReference type="ChEBI" id="CHEBI:24875"/>
    </ligand>
</feature>
<feature type="binding site" evidence="1">
    <location>
        <position position="414"/>
    </location>
    <ligand>
        <name>Fe cation</name>
        <dbReference type="ChEBI" id="CHEBI:24875"/>
    </ligand>
</feature>
<feature type="binding site" evidence="1">
    <location>
        <position position="454"/>
    </location>
    <ligand>
        <name>Fe cation</name>
        <dbReference type="ChEBI" id="CHEBI:24875"/>
    </ligand>
</feature>
<feature type="splice variant" id="VSP_000545" description="In isoform Hypodermal." evidence="5">
    <location>
        <begin position="60"/>
        <end position="130"/>
    </location>
</feature>
<feature type="sequence conflict" description="In Ref. 4; AAL49320." evidence="6" ref="4">
    <original>P</original>
    <variation>L</variation>
    <location>
        <position position="264"/>
    </location>
</feature>